<evidence type="ECO:0000255" key="1">
    <source>
        <dbReference type="HAMAP-Rule" id="MF_00692"/>
    </source>
</evidence>
<gene>
    <name evidence="1" type="primary">ydiU</name>
    <name evidence="1" type="synonym">selO</name>
    <name type="ordered locus">YPK_1840</name>
</gene>
<protein>
    <recommendedName>
        <fullName evidence="1">Protein nucleotidyltransferase YdiU</fullName>
        <ecNumber evidence="1">2.7.7.-</ecNumber>
    </recommendedName>
    <alternativeName>
        <fullName evidence="1">Protein adenylyltransferase YdiU</fullName>
        <ecNumber evidence="1">2.7.7.108</ecNumber>
    </alternativeName>
    <alternativeName>
        <fullName evidence="1">Protein uridylyltransferase YdiU</fullName>
        <ecNumber evidence="1">2.7.7.-</ecNumber>
    </alternativeName>
</protein>
<sequence>MKPRMEYAPEFDNSYARQLSGFYTRLQPTPLKGARLLYHSKPLAQELGLDAHWFTEPKTAVWAGEALLPGMEPLAQVYSGHQFGMWAGQLGDGRGILLGEQRLNDGRYMDWHLKGAGLTPYSRMGDGRAVLRSVIREFLASEALHHLGIPTSRALTIVTSDHPIYREQTERGAMLLRVAESHIRFGHFEHFYYRQQPKQVQQLADYVIARHWPQWVGHQECYRLWFTDVVERTARLMAHWQTVGFAHGVMNTDNMSILGITMDYGPFGFLDDYVPGYICNHSDHQGRYAYDNQPAVALWNLHRLGHALSGLMSADQLQLALEAYEPALMVAYGEQMRAKLGFLERDSQDNDLLTGLLSLMIKEGRDYTRTFRLLSEVEVHSAQSPLRDDFIDRAAFDDWYRRYRSRLQQESIDDDQRQQSMKAANPKYILRNYLAQQAITQAEKDDIQPLQRLHQALQQPFTDQPEFDDLAALPPDWGKHLEISCSS</sequence>
<keyword id="KW-0067">ATP-binding</keyword>
<keyword id="KW-0460">Magnesium</keyword>
<keyword id="KW-0464">Manganese</keyword>
<keyword id="KW-0479">Metal-binding</keyword>
<keyword id="KW-0547">Nucleotide-binding</keyword>
<keyword id="KW-0548">Nucleotidyltransferase</keyword>
<keyword id="KW-0808">Transferase</keyword>
<proteinExistence type="inferred from homology"/>
<comment type="function">
    <text evidence="1">Nucleotidyltransferase involved in the post-translational modification of proteins. It can catalyze the addition of adenosine monophosphate (AMP) or uridine monophosphate (UMP) to a protein, resulting in modifications known as AMPylation and UMPylation.</text>
</comment>
<comment type="catalytic activity">
    <reaction evidence="1">
        <text>L-seryl-[protein] + ATP = 3-O-(5'-adenylyl)-L-seryl-[protein] + diphosphate</text>
        <dbReference type="Rhea" id="RHEA:58120"/>
        <dbReference type="Rhea" id="RHEA-COMP:9863"/>
        <dbReference type="Rhea" id="RHEA-COMP:15073"/>
        <dbReference type="ChEBI" id="CHEBI:29999"/>
        <dbReference type="ChEBI" id="CHEBI:30616"/>
        <dbReference type="ChEBI" id="CHEBI:33019"/>
        <dbReference type="ChEBI" id="CHEBI:142516"/>
        <dbReference type="EC" id="2.7.7.108"/>
    </reaction>
</comment>
<comment type="catalytic activity">
    <reaction evidence="1">
        <text>L-threonyl-[protein] + ATP = 3-O-(5'-adenylyl)-L-threonyl-[protein] + diphosphate</text>
        <dbReference type="Rhea" id="RHEA:54292"/>
        <dbReference type="Rhea" id="RHEA-COMP:11060"/>
        <dbReference type="Rhea" id="RHEA-COMP:13847"/>
        <dbReference type="ChEBI" id="CHEBI:30013"/>
        <dbReference type="ChEBI" id="CHEBI:30616"/>
        <dbReference type="ChEBI" id="CHEBI:33019"/>
        <dbReference type="ChEBI" id="CHEBI:138113"/>
        <dbReference type="EC" id="2.7.7.108"/>
    </reaction>
</comment>
<comment type="catalytic activity">
    <reaction evidence="1">
        <text>L-tyrosyl-[protein] + ATP = O-(5'-adenylyl)-L-tyrosyl-[protein] + diphosphate</text>
        <dbReference type="Rhea" id="RHEA:54288"/>
        <dbReference type="Rhea" id="RHEA-COMP:10136"/>
        <dbReference type="Rhea" id="RHEA-COMP:13846"/>
        <dbReference type="ChEBI" id="CHEBI:30616"/>
        <dbReference type="ChEBI" id="CHEBI:33019"/>
        <dbReference type="ChEBI" id="CHEBI:46858"/>
        <dbReference type="ChEBI" id="CHEBI:83624"/>
        <dbReference type="EC" id="2.7.7.108"/>
    </reaction>
</comment>
<comment type="catalytic activity">
    <reaction evidence="1">
        <text>L-histidyl-[protein] + UTP = N(tele)-(5'-uridylyl)-L-histidyl-[protein] + diphosphate</text>
        <dbReference type="Rhea" id="RHEA:83891"/>
        <dbReference type="Rhea" id="RHEA-COMP:9745"/>
        <dbReference type="Rhea" id="RHEA-COMP:20239"/>
        <dbReference type="ChEBI" id="CHEBI:29979"/>
        <dbReference type="ChEBI" id="CHEBI:33019"/>
        <dbReference type="ChEBI" id="CHEBI:46398"/>
        <dbReference type="ChEBI" id="CHEBI:233474"/>
    </reaction>
</comment>
<comment type="catalytic activity">
    <reaction evidence="1">
        <text>L-seryl-[protein] + UTP = O-(5'-uridylyl)-L-seryl-[protein] + diphosphate</text>
        <dbReference type="Rhea" id="RHEA:64604"/>
        <dbReference type="Rhea" id="RHEA-COMP:9863"/>
        <dbReference type="Rhea" id="RHEA-COMP:16635"/>
        <dbReference type="ChEBI" id="CHEBI:29999"/>
        <dbReference type="ChEBI" id="CHEBI:33019"/>
        <dbReference type="ChEBI" id="CHEBI:46398"/>
        <dbReference type="ChEBI" id="CHEBI:156051"/>
    </reaction>
</comment>
<comment type="catalytic activity">
    <reaction evidence="1">
        <text>L-tyrosyl-[protein] + UTP = O-(5'-uridylyl)-L-tyrosyl-[protein] + diphosphate</text>
        <dbReference type="Rhea" id="RHEA:83887"/>
        <dbReference type="Rhea" id="RHEA-COMP:10136"/>
        <dbReference type="Rhea" id="RHEA-COMP:20238"/>
        <dbReference type="ChEBI" id="CHEBI:33019"/>
        <dbReference type="ChEBI" id="CHEBI:46398"/>
        <dbReference type="ChEBI" id="CHEBI:46858"/>
        <dbReference type="ChEBI" id="CHEBI:90602"/>
    </reaction>
</comment>
<comment type="cofactor">
    <cofactor evidence="1">
        <name>Mg(2+)</name>
        <dbReference type="ChEBI" id="CHEBI:18420"/>
    </cofactor>
    <cofactor evidence="1">
        <name>Mn(2+)</name>
        <dbReference type="ChEBI" id="CHEBI:29035"/>
    </cofactor>
</comment>
<comment type="similarity">
    <text evidence="1">Belongs to the SELO family.</text>
</comment>
<accession>B1JJ37</accession>
<dbReference type="EC" id="2.7.7.-" evidence="1"/>
<dbReference type="EC" id="2.7.7.108" evidence="1"/>
<dbReference type="EMBL" id="CP000950">
    <property type="protein sequence ID" value="ACA68131.1"/>
    <property type="molecule type" value="Genomic_DNA"/>
</dbReference>
<dbReference type="RefSeq" id="WP_011192539.1">
    <property type="nucleotide sequence ID" value="NZ_CP009792.1"/>
</dbReference>
<dbReference type="SMR" id="B1JJ37"/>
<dbReference type="KEGG" id="ypy:YPK_1840"/>
<dbReference type="GO" id="GO:0070733">
    <property type="term" value="F:AMPylase activity"/>
    <property type="evidence" value="ECO:0007669"/>
    <property type="project" value="TreeGrafter"/>
</dbReference>
<dbReference type="GO" id="GO:0005524">
    <property type="term" value="F:ATP binding"/>
    <property type="evidence" value="ECO:0007669"/>
    <property type="project" value="UniProtKB-UniRule"/>
</dbReference>
<dbReference type="GO" id="GO:0000287">
    <property type="term" value="F:magnesium ion binding"/>
    <property type="evidence" value="ECO:0007669"/>
    <property type="project" value="UniProtKB-UniRule"/>
</dbReference>
<dbReference type="HAMAP" id="MF_00692">
    <property type="entry name" value="YdiU_SelO"/>
    <property type="match status" value="1"/>
</dbReference>
<dbReference type="InterPro" id="IPR003846">
    <property type="entry name" value="SelO"/>
</dbReference>
<dbReference type="NCBIfam" id="NF000658">
    <property type="entry name" value="PRK00029.1"/>
    <property type="match status" value="1"/>
</dbReference>
<dbReference type="PANTHER" id="PTHR32057">
    <property type="entry name" value="PROTEIN ADENYLYLTRANSFERASE SELO, MITOCHONDRIAL"/>
    <property type="match status" value="1"/>
</dbReference>
<dbReference type="PANTHER" id="PTHR32057:SF14">
    <property type="entry name" value="PROTEIN ADENYLYLTRANSFERASE SELO, MITOCHONDRIAL"/>
    <property type="match status" value="1"/>
</dbReference>
<dbReference type="Pfam" id="PF02696">
    <property type="entry name" value="SelO"/>
    <property type="match status" value="1"/>
</dbReference>
<name>SELO_YERPY</name>
<organism>
    <name type="scientific">Yersinia pseudotuberculosis serotype O:3 (strain YPIII)</name>
    <dbReference type="NCBI Taxonomy" id="502800"/>
    <lineage>
        <taxon>Bacteria</taxon>
        <taxon>Pseudomonadati</taxon>
        <taxon>Pseudomonadota</taxon>
        <taxon>Gammaproteobacteria</taxon>
        <taxon>Enterobacterales</taxon>
        <taxon>Yersiniaceae</taxon>
        <taxon>Yersinia</taxon>
    </lineage>
</organism>
<feature type="chain" id="PRO_1000132134" description="Protein nucleotidyltransferase YdiU">
    <location>
        <begin position="1"/>
        <end position="487"/>
    </location>
</feature>
<feature type="active site" description="Proton acceptor" evidence="1">
    <location>
        <position position="253"/>
    </location>
</feature>
<feature type="binding site" evidence="1">
    <location>
        <position position="91"/>
    </location>
    <ligand>
        <name>ATP</name>
        <dbReference type="ChEBI" id="CHEBI:30616"/>
    </ligand>
</feature>
<feature type="binding site" evidence="1">
    <location>
        <position position="93"/>
    </location>
    <ligand>
        <name>ATP</name>
        <dbReference type="ChEBI" id="CHEBI:30616"/>
    </ligand>
</feature>
<feature type="binding site" evidence="1">
    <location>
        <position position="94"/>
    </location>
    <ligand>
        <name>ATP</name>
        <dbReference type="ChEBI" id="CHEBI:30616"/>
    </ligand>
</feature>
<feature type="binding site" evidence="1">
    <location>
        <position position="114"/>
    </location>
    <ligand>
        <name>ATP</name>
        <dbReference type="ChEBI" id="CHEBI:30616"/>
    </ligand>
</feature>
<feature type="binding site" evidence="1">
    <location>
        <position position="126"/>
    </location>
    <ligand>
        <name>ATP</name>
        <dbReference type="ChEBI" id="CHEBI:30616"/>
    </ligand>
</feature>
<feature type="binding site" evidence="1">
    <location>
        <position position="127"/>
    </location>
    <ligand>
        <name>ATP</name>
        <dbReference type="ChEBI" id="CHEBI:30616"/>
    </ligand>
</feature>
<feature type="binding site" evidence="1">
    <location>
        <position position="177"/>
    </location>
    <ligand>
        <name>ATP</name>
        <dbReference type="ChEBI" id="CHEBI:30616"/>
    </ligand>
</feature>
<feature type="binding site" evidence="1">
    <location>
        <position position="184"/>
    </location>
    <ligand>
        <name>ATP</name>
        <dbReference type="ChEBI" id="CHEBI:30616"/>
    </ligand>
</feature>
<feature type="binding site" evidence="1">
    <location>
        <position position="254"/>
    </location>
    <ligand>
        <name>Mg(2+)</name>
        <dbReference type="ChEBI" id="CHEBI:18420"/>
    </ligand>
</feature>
<feature type="binding site" evidence="1">
    <location>
        <position position="263"/>
    </location>
    <ligand>
        <name>ATP</name>
        <dbReference type="ChEBI" id="CHEBI:30616"/>
    </ligand>
</feature>
<feature type="binding site" evidence="1">
    <location>
        <position position="263"/>
    </location>
    <ligand>
        <name>Mg(2+)</name>
        <dbReference type="ChEBI" id="CHEBI:18420"/>
    </ligand>
</feature>
<reference key="1">
    <citation type="submission" date="2008-02" db="EMBL/GenBank/DDBJ databases">
        <title>Complete sequence of Yersinia pseudotuberculosis YPIII.</title>
        <authorList>
            <consortium name="US DOE Joint Genome Institute"/>
            <person name="Copeland A."/>
            <person name="Lucas S."/>
            <person name="Lapidus A."/>
            <person name="Glavina del Rio T."/>
            <person name="Dalin E."/>
            <person name="Tice H."/>
            <person name="Bruce D."/>
            <person name="Goodwin L."/>
            <person name="Pitluck S."/>
            <person name="Munk A.C."/>
            <person name="Brettin T."/>
            <person name="Detter J.C."/>
            <person name="Han C."/>
            <person name="Tapia R."/>
            <person name="Schmutz J."/>
            <person name="Larimer F."/>
            <person name="Land M."/>
            <person name="Hauser L."/>
            <person name="Challacombe J.F."/>
            <person name="Green L."/>
            <person name="Lindler L.E."/>
            <person name="Nikolich M.P."/>
            <person name="Richardson P."/>
        </authorList>
    </citation>
    <scope>NUCLEOTIDE SEQUENCE [LARGE SCALE GENOMIC DNA]</scope>
    <source>
        <strain>YPIII</strain>
    </source>
</reference>